<name>RDGC_RALN1</name>
<organism>
    <name type="scientific">Ralstonia nicotianae (strain ATCC BAA-1114 / GMI1000)</name>
    <name type="common">Ralstonia solanacearum</name>
    <dbReference type="NCBI Taxonomy" id="267608"/>
    <lineage>
        <taxon>Bacteria</taxon>
        <taxon>Pseudomonadati</taxon>
        <taxon>Pseudomonadota</taxon>
        <taxon>Betaproteobacteria</taxon>
        <taxon>Burkholderiales</taxon>
        <taxon>Burkholderiaceae</taxon>
        <taxon>Ralstonia</taxon>
        <taxon>Ralstonia solanacearum species complex</taxon>
    </lineage>
</organism>
<protein>
    <recommendedName>
        <fullName>Recombination-associated protein RdgC</fullName>
    </recommendedName>
</protein>
<gene>
    <name type="primary">rdgC</name>
    <name type="ordered locus">RSc0618</name>
    <name type="ORF">RS01519</name>
</gene>
<evidence type="ECO:0000250" key="1"/>
<evidence type="ECO:0000305" key="2"/>
<feature type="chain" id="PRO_0000211748" description="Recombination-associated protein RdgC">
    <location>
        <begin position="1"/>
        <end position="307"/>
    </location>
</feature>
<accession>Q8Y1S1</accession>
<proteinExistence type="inferred from homology"/>
<keyword id="KW-0963">Cytoplasm</keyword>
<keyword id="KW-0233">DNA recombination</keyword>
<keyword id="KW-1185">Reference proteome</keyword>
<reference key="1">
    <citation type="journal article" date="2002" name="Nature">
        <title>Genome sequence of the plant pathogen Ralstonia solanacearum.</title>
        <authorList>
            <person name="Salanoubat M."/>
            <person name="Genin S."/>
            <person name="Artiguenave F."/>
            <person name="Gouzy J."/>
            <person name="Mangenot S."/>
            <person name="Arlat M."/>
            <person name="Billault A."/>
            <person name="Brottier P."/>
            <person name="Camus J.-C."/>
            <person name="Cattolico L."/>
            <person name="Chandler M."/>
            <person name="Choisne N."/>
            <person name="Claudel-Renard C."/>
            <person name="Cunnac S."/>
            <person name="Demange N."/>
            <person name="Gaspin C."/>
            <person name="Lavie M."/>
            <person name="Moisan A."/>
            <person name="Robert C."/>
            <person name="Saurin W."/>
            <person name="Schiex T."/>
            <person name="Siguier P."/>
            <person name="Thebault P."/>
            <person name="Whalen M."/>
            <person name="Wincker P."/>
            <person name="Levy M."/>
            <person name="Weissenbach J."/>
            <person name="Boucher C.A."/>
        </authorList>
    </citation>
    <scope>NUCLEOTIDE SEQUENCE [LARGE SCALE GENOMIC DNA]</scope>
    <source>
        <strain>ATCC BAA-1114 / GMI1000</strain>
    </source>
</reference>
<comment type="function">
    <text evidence="1">May be involved in recombination.</text>
</comment>
<comment type="subcellular location">
    <subcellularLocation>
        <location evidence="1">Cytoplasm</location>
        <location evidence="1">Nucleoid</location>
    </subcellularLocation>
</comment>
<comment type="similarity">
    <text evidence="2">Belongs to the RdgC family.</text>
</comment>
<dbReference type="EMBL" id="AL646052">
    <property type="protein sequence ID" value="CAD14148.1"/>
    <property type="molecule type" value="Genomic_DNA"/>
</dbReference>
<dbReference type="RefSeq" id="WP_011000576.1">
    <property type="nucleotide sequence ID" value="NC_003295.1"/>
</dbReference>
<dbReference type="SMR" id="Q8Y1S1"/>
<dbReference type="STRING" id="267608.RSc0618"/>
<dbReference type="EnsemblBacteria" id="CAD14148">
    <property type="protein sequence ID" value="CAD14148"/>
    <property type="gene ID" value="RSc0618"/>
</dbReference>
<dbReference type="KEGG" id="rso:RSc0618"/>
<dbReference type="eggNOG" id="COG2974">
    <property type="taxonomic scope" value="Bacteria"/>
</dbReference>
<dbReference type="HOGENOM" id="CLU_052038_0_1_4"/>
<dbReference type="Proteomes" id="UP000001436">
    <property type="component" value="Chromosome"/>
</dbReference>
<dbReference type="GO" id="GO:0043590">
    <property type="term" value="C:bacterial nucleoid"/>
    <property type="evidence" value="ECO:0007669"/>
    <property type="project" value="TreeGrafter"/>
</dbReference>
<dbReference type="GO" id="GO:0005737">
    <property type="term" value="C:cytoplasm"/>
    <property type="evidence" value="ECO:0007669"/>
    <property type="project" value="UniProtKB-UniRule"/>
</dbReference>
<dbReference type="GO" id="GO:0003690">
    <property type="term" value="F:double-stranded DNA binding"/>
    <property type="evidence" value="ECO:0007669"/>
    <property type="project" value="TreeGrafter"/>
</dbReference>
<dbReference type="GO" id="GO:0006310">
    <property type="term" value="P:DNA recombination"/>
    <property type="evidence" value="ECO:0007669"/>
    <property type="project" value="UniProtKB-UniRule"/>
</dbReference>
<dbReference type="GO" id="GO:0000018">
    <property type="term" value="P:regulation of DNA recombination"/>
    <property type="evidence" value="ECO:0007669"/>
    <property type="project" value="TreeGrafter"/>
</dbReference>
<dbReference type="HAMAP" id="MF_00194">
    <property type="entry name" value="RdgC"/>
    <property type="match status" value="1"/>
</dbReference>
<dbReference type="InterPro" id="IPR007476">
    <property type="entry name" value="RdgC"/>
</dbReference>
<dbReference type="NCBIfam" id="NF001463">
    <property type="entry name" value="PRK00321.1-4"/>
    <property type="match status" value="1"/>
</dbReference>
<dbReference type="NCBIfam" id="NF001464">
    <property type="entry name" value="PRK00321.1-5"/>
    <property type="match status" value="1"/>
</dbReference>
<dbReference type="PANTHER" id="PTHR38103">
    <property type="entry name" value="RECOMBINATION-ASSOCIATED PROTEIN RDGC"/>
    <property type="match status" value="1"/>
</dbReference>
<dbReference type="PANTHER" id="PTHR38103:SF1">
    <property type="entry name" value="RECOMBINATION-ASSOCIATED PROTEIN RDGC"/>
    <property type="match status" value="1"/>
</dbReference>
<dbReference type="Pfam" id="PF04381">
    <property type="entry name" value="RdgC"/>
    <property type="match status" value="1"/>
</dbReference>
<sequence length="307" mass="33937">MWFKNLQLHRLPAPWAVAPDQIEKWLAPHAFQPGNSVEKQCSGWASPRDDGALVYSINRQMLLVFRAEKKLLPASVVNQVTKARALEVEEQQGFKLGRKQLRELKEQVTDELLPRAFTIRRDTRVWIDTANGWLVIDAAAQALGDDVRGLLVKSIDQLPLASVRVALSPVAAMTDWLLSGEAPGGFTVDQDAELRSSGEGGATVRYVGHALEADDMRRHIEAGKQCVRLAMTWDNRISFVLTPSLTIKRVTPLDVIKEAADPTAQNDDERFESDVALMTGELGRMLTDLVDILGGDQHDSMHQAAAA</sequence>